<protein>
    <recommendedName>
        <fullName evidence="1">ESAT-6-like protein EsxV</fullName>
    </recommendedName>
</protein>
<evidence type="ECO:0000250" key="1">
    <source>
        <dbReference type="UniProtKB" id="P0DOA7"/>
    </source>
</evidence>
<evidence type="ECO:0000305" key="2"/>
<accession>P0DOA9</accession>
<accession>L0TEQ6</accession>
<accession>O08120</accession>
<accession>O08122</accession>
<accession>P96364</accession>
<accession>P9WNK0</accession>
<accession>Q9L781</accession>
<feature type="chain" id="PRO_0000436929" description="ESAT-6-like protein EsxV">
    <location>
        <begin position="1"/>
        <end position="94"/>
    </location>
</feature>
<reference key="1">
    <citation type="journal article" date="2002" name="J. Bacteriol.">
        <title>Whole-genome comparison of Mycobacterium tuberculosis clinical and laboratory strains.</title>
        <authorList>
            <person name="Fleischmann R.D."/>
            <person name="Alland D."/>
            <person name="Eisen J.A."/>
            <person name="Carpenter L."/>
            <person name="White O."/>
            <person name="Peterson J.D."/>
            <person name="DeBoy R.T."/>
            <person name="Dodson R.J."/>
            <person name="Gwinn M.L."/>
            <person name="Haft D.H."/>
            <person name="Hickey E.K."/>
            <person name="Kolonay J.F."/>
            <person name="Nelson W.C."/>
            <person name="Umayam L.A."/>
            <person name="Ermolaeva M.D."/>
            <person name="Salzberg S.L."/>
            <person name="Delcher A."/>
            <person name="Utterback T.R."/>
            <person name="Weidman J.F."/>
            <person name="Khouri H.M."/>
            <person name="Gill J."/>
            <person name="Mikula A."/>
            <person name="Bishai W."/>
            <person name="Jacobs W.R. Jr."/>
            <person name="Venter J.C."/>
            <person name="Fraser C.M."/>
        </authorList>
    </citation>
    <scope>NUCLEOTIDE SEQUENCE [LARGE SCALE GENOMIC DNA]</scope>
    <source>
        <strain>CDC 1551 / Oshkosh</strain>
    </source>
</reference>
<organism>
    <name type="scientific">Mycobacterium tuberculosis (strain CDC 1551 / Oshkosh)</name>
    <dbReference type="NCBI Taxonomy" id="83331"/>
    <lineage>
        <taxon>Bacteria</taxon>
        <taxon>Bacillati</taxon>
        <taxon>Actinomycetota</taxon>
        <taxon>Actinomycetes</taxon>
        <taxon>Mycobacteriales</taxon>
        <taxon>Mycobacteriaceae</taxon>
        <taxon>Mycobacterium</taxon>
        <taxon>Mycobacterium tuberculosis complex</taxon>
    </lineage>
</organism>
<proteinExistence type="inferred from homology"/>
<keyword id="KW-1185">Reference proteome</keyword>
<keyword id="KW-0964">Secreted</keyword>
<dbReference type="EMBL" id="AE000516">
    <property type="protein sequence ID" value="AAK48082.1"/>
    <property type="molecule type" value="Genomic_DNA"/>
</dbReference>
<dbReference type="PIR" id="D70560">
    <property type="entry name" value="D70560"/>
</dbReference>
<dbReference type="SMR" id="P0DOA9"/>
<dbReference type="KEGG" id="mtc:MT3721"/>
<dbReference type="PATRIC" id="fig|83331.31.peg.4005"/>
<dbReference type="HOGENOM" id="CLU_192559_0_0_11"/>
<dbReference type="Proteomes" id="UP000001020">
    <property type="component" value="Chromosome"/>
</dbReference>
<dbReference type="GO" id="GO:0005576">
    <property type="term" value="C:extracellular region"/>
    <property type="evidence" value="ECO:0007669"/>
    <property type="project" value="UniProtKB-SubCell"/>
</dbReference>
<dbReference type="Gene3D" id="1.10.287.1060">
    <property type="entry name" value="ESAT-6-like"/>
    <property type="match status" value="1"/>
</dbReference>
<dbReference type="InterPro" id="IPR009416">
    <property type="entry name" value="ESAT-6-like_Myco"/>
</dbReference>
<dbReference type="InterPro" id="IPR036689">
    <property type="entry name" value="ESAT-6-like_sf"/>
</dbReference>
<dbReference type="InterPro" id="IPR010310">
    <property type="entry name" value="T7SS_ESAT-6-like"/>
</dbReference>
<dbReference type="Pfam" id="PF06013">
    <property type="entry name" value="WXG100"/>
    <property type="match status" value="1"/>
</dbReference>
<dbReference type="PIRSF" id="PIRSF037656">
    <property type="entry name" value="DUF1066"/>
    <property type="match status" value="1"/>
</dbReference>
<dbReference type="SUPFAM" id="SSF140453">
    <property type="entry name" value="EsxAB dimer-like"/>
    <property type="match status" value="1"/>
</dbReference>
<gene>
    <name evidence="1" type="primary">esxV</name>
    <name type="ordered locus">MT3721</name>
</gene>
<name>ESXV_MYCTO</name>
<comment type="subunit">
    <text evidence="1">Forms a tight 1:1 complex with EsxW.</text>
</comment>
<comment type="subcellular location">
    <subcellularLocation>
        <location evidence="1">Secreted</location>
    </subcellularLocation>
    <text evidence="1">Probably secreted via the ESX-5 / type VII secretion system (T7SS).</text>
</comment>
<comment type="similarity">
    <text evidence="2">Belongs to the WXG100 family. ESAT-6 subfamily.</text>
</comment>
<sequence>MTINYQFGDVDAHGAMIRALAGLLEAEHQAIISDVLTASDFWGGAGSAACQGFITQLGRNFQVIYEQANAHGQKVQAAGNNMAQTDSAVGSSWA</sequence>